<accession>Q94F40</accession>
<accession>A0A2H1ZEC6</accession>
<accession>Q2V4K5</accession>
<accession>Q8LAS3</accession>
<accession>Q9FXJ3</accession>
<proteinExistence type="evidence at transcript level"/>
<feature type="signal peptide" evidence="2">
    <location>
        <begin position="1"/>
        <end position="22"/>
    </location>
</feature>
<feature type="chain" id="PRO_0000367351" description="GDSL esterase/lipase At1g28600">
    <location>
        <begin position="23"/>
        <end position="393"/>
    </location>
</feature>
<feature type="active site" description="Nucleophile" evidence="1">
    <location>
        <position position="38"/>
    </location>
</feature>
<feature type="active site" evidence="1">
    <location>
        <position position="340"/>
    </location>
</feature>
<feature type="active site" evidence="1">
    <location>
        <position position="343"/>
    </location>
</feature>
<feature type="glycosylation site" description="N-linked (GlcNAc...) asparagine" evidence="2">
    <location>
        <position position="133"/>
    </location>
</feature>
<feature type="glycosylation site" description="N-linked (GlcNAc...) asparagine" evidence="2">
    <location>
        <position position="317"/>
    </location>
</feature>
<feature type="glycosylation site" description="N-linked (GlcNAc...) asparagine" evidence="2">
    <location>
        <position position="382"/>
    </location>
</feature>
<feature type="splice variant" id="VSP_036688" description="In isoform 2." evidence="3">
    <location>
        <begin position="299"/>
        <end position="393"/>
    </location>
</feature>
<feature type="sequence conflict" description="In Ref. 4; AAM65183." evidence="3" ref="4">
    <original>P</original>
    <variation>R</variation>
    <location>
        <position position="27"/>
    </location>
</feature>
<feature type="sequence conflict" description="In Ref. 4; AAM65183." evidence="3" ref="4">
    <original>G</original>
    <variation>R</variation>
    <location>
        <position position="137"/>
    </location>
</feature>
<feature type="sequence conflict" description="In Ref. 4; AAM65183." evidence="3" ref="4">
    <original>S</original>
    <variation>T</variation>
    <location>
        <position position="244"/>
    </location>
</feature>
<feature type="sequence conflict" description="In Ref. 4; AAM65183." evidence="3" ref="4">
    <original>V</original>
    <variation>A</variation>
    <location>
        <position position="264"/>
    </location>
</feature>
<feature type="sequence conflict" description="In Ref. 4; AAM65183." evidence="3" ref="4">
    <original>E</original>
    <variation>D</variation>
    <location>
        <position position="301"/>
    </location>
</feature>
<evidence type="ECO:0000250" key="1"/>
<evidence type="ECO:0000255" key="2"/>
<evidence type="ECO:0000305" key="3"/>
<dbReference type="EC" id="3.1.1.-"/>
<dbReference type="EMBL" id="AC007508">
    <property type="protein sequence ID" value="AAF24548.2"/>
    <property type="status" value="ALT_SEQ"/>
    <property type="molecule type" value="Genomic_DNA"/>
</dbReference>
<dbReference type="EMBL" id="CP002684">
    <property type="protein sequence ID" value="AEE31000.2"/>
    <property type="status" value="ALT_SEQ"/>
    <property type="molecule type" value="Genomic_DNA"/>
</dbReference>
<dbReference type="EMBL" id="AF385739">
    <property type="protein sequence ID" value="AAK60329.1"/>
    <property type="molecule type" value="mRNA"/>
</dbReference>
<dbReference type="EMBL" id="AY133675">
    <property type="protein sequence ID" value="AAM91505.1"/>
    <property type="molecule type" value="mRNA"/>
</dbReference>
<dbReference type="EMBL" id="AY087645">
    <property type="protein sequence ID" value="AAM65183.1"/>
    <property type="molecule type" value="mRNA"/>
</dbReference>
<dbReference type="RefSeq" id="NP_001319101.1">
    <property type="nucleotide sequence ID" value="NM_001332821.1"/>
</dbReference>
<dbReference type="RefSeq" id="NP_174182.1">
    <molecule id="Q94F40-1"/>
    <property type="nucleotide sequence ID" value="NM_102628.4"/>
</dbReference>
<dbReference type="SMR" id="Q94F40"/>
<dbReference type="FunCoup" id="Q94F40">
    <property type="interactions" value="120"/>
</dbReference>
<dbReference type="STRING" id="3702.Q94F40"/>
<dbReference type="GlyGen" id="Q94F40">
    <property type="glycosylation" value="3 sites"/>
</dbReference>
<dbReference type="PaxDb" id="3702-AT1G28600.1"/>
<dbReference type="ProteomicsDB" id="221998">
    <molecule id="Q94F40-1"/>
</dbReference>
<dbReference type="EnsemblPlants" id="AT1G28600.1">
    <molecule id="Q94F40-1"/>
    <property type="protein sequence ID" value="AT1G28600.1"/>
    <property type="gene ID" value="AT1G28600"/>
</dbReference>
<dbReference type="GeneID" id="839760"/>
<dbReference type="Gramene" id="AT1G28600.1">
    <molecule id="Q94F40-1"/>
    <property type="protein sequence ID" value="AT1G28600.1"/>
    <property type="gene ID" value="AT1G28600"/>
</dbReference>
<dbReference type="KEGG" id="ath:AT1G28600"/>
<dbReference type="Araport" id="AT1G28600"/>
<dbReference type="TAIR" id="AT1G28600"/>
<dbReference type="eggNOG" id="ENOG502QSMM">
    <property type="taxonomic scope" value="Eukaryota"/>
</dbReference>
<dbReference type="HOGENOM" id="CLU_015101_2_1_1"/>
<dbReference type="InParanoid" id="Q94F40"/>
<dbReference type="OMA" id="NEECGYR"/>
<dbReference type="PhylomeDB" id="Q94F40"/>
<dbReference type="BioCyc" id="ARA:AT1G28600-MONOMER"/>
<dbReference type="PRO" id="PR:Q94F40"/>
<dbReference type="Proteomes" id="UP000006548">
    <property type="component" value="Chromosome 1"/>
</dbReference>
<dbReference type="ExpressionAtlas" id="Q94F40">
    <property type="expression patterns" value="baseline and differential"/>
</dbReference>
<dbReference type="GO" id="GO:0005576">
    <property type="term" value="C:extracellular region"/>
    <property type="evidence" value="ECO:0007669"/>
    <property type="project" value="UniProtKB-SubCell"/>
</dbReference>
<dbReference type="GO" id="GO:0016788">
    <property type="term" value="F:hydrolase activity, acting on ester bonds"/>
    <property type="evidence" value="ECO:0007669"/>
    <property type="project" value="InterPro"/>
</dbReference>
<dbReference type="GO" id="GO:0016042">
    <property type="term" value="P:lipid catabolic process"/>
    <property type="evidence" value="ECO:0007669"/>
    <property type="project" value="UniProtKB-KW"/>
</dbReference>
<dbReference type="CDD" id="cd01837">
    <property type="entry name" value="SGNH_plant_lipase_like"/>
    <property type="match status" value="1"/>
</dbReference>
<dbReference type="FunFam" id="3.40.50.1110:FF:000024">
    <property type="entry name" value="GDSL esterase/lipase At1g31550"/>
    <property type="match status" value="1"/>
</dbReference>
<dbReference type="Gene3D" id="3.40.50.1110">
    <property type="entry name" value="SGNH hydrolase"/>
    <property type="match status" value="1"/>
</dbReference>
<dbReference type="InterPro" id="IPR001087">
    <property type="entry name" value="GDSL"/>
</dbReference>
<dbReference type="InterPro" id="IPR036514">
    <property type="entry name" value="SGNH_hydro_sf"/>
</dbReference>
<dbReference type="InterPro" id="IPR035669">
    <property type="entry name" value="SGNH_plant_lipase-like"/>
</dbReference>
<dbReference type="PANTHER" id="PTHR22835:SF678">
    <property type="entry name" value="SINAPINE ESTERASE"/>
    <property type="match status" value="1"/>
</dbReference>
<dbReference type="PANTHER" id="PTHR22835">
    <property type="entry name" value="ZINC FINGER FYVE DOMAIN CONTAINING PROTEIN"/>
    <property type="match status" value="1"/>
</dbReference>
<dbReference type="Pfam" id="PF00657">
    <property type="entry name" value="Lipase_GDSL"/>
    <property type="match status" value="1"/>
</dbReference>
<dbReference type="SUPFAM" id="SSF52266">
    <property type="entry name" value="SGNH hydrolase"/>
    <property type="match status" value="1"/>
</dbReference>
<comment type="subcellular location">
    <subcellularLocation>
        <location evidence="3">Secreted</location>
    </subcellularLocation>
</comment>
<comment type="alternative products">
    <event type="alternative splicing"/>
    <isoform>
        <id>Q94F40-1</id>
        <name>1</name>
        <sequence type="displayed"/>
    </isoform>
    <isoform>
        <id>Q94F40-2</id>
        <name>2</name>
        <sequence type="described" ref="VSP_036688"/>
    </isoform>
</comment>
<comment type="similarity">
    <text evidence="3">Belongs to the 'GDSL' lipolytic enzyme family.</text>
</comment>
<comment type="sequence caution" evidence="3">
    <conflict type="erroneous gene model prediction">
        <sequence resource="EMBL-CDS" id="AAF24548"/>
    </conflict>
    <text>The predicted gene At1g28590 has been split into 2 genes: At1g28590 and At1g28600.</text>
</comment>
<comment type="sequence caution" evidence="3">
    <conflict type="erroneous gene model prediction">
        <sequence resource="EMBL-CDS" id="AEE31000"/>
    </conflict>
</comment>
<protein>
    <recommendedName>
        <fullName>GDSL esterase/lipase At1g28600</fullName>
        <ecNumber>3.1.1.-</ecNumber>
    </recommendedName>
    <alternativeName>
        <fullName>Extracellular lipase At1g28600</fullName>
    </alternativeName>
</protein>
<name>GDL9_ARATH</name>
<keyword id="KW-0025">Alternative splicing</keyword>
<keyword id="KW-0325">Glycoprotein</keyword>
<keyword id="KW-0378">Hydrolase</keyword>
<keyword id="KW-0442">Lipid degradation</keyword>
<keyword id="KW-0443">Lipid metabolism</keyword>
<keyword id="KW-1185">Reference proteome</keyword>
<keyword id="KW-0964">Secreted</keyword>
<keyword id="KW-0732">Signal</keyword>
<sequence length="393" mass="43610">MASLDSLVIFLFSTLFVTIVSSETPCPNFKSIISFGDSIADTGNLVGLSDRNQLPVTAFPPYGETFFHHPTGRSCDGRIIMDFIAEFVGLPYVPPYFGSKNRNFDKGVNFAVAGATALKSSFLKKRGIQPHTNVSLGVQLKSFKKSLPNLCGSPSDCRDMIGNALILMGEIGGNDYNFPFFNRKPVKEVEELVPFVIASISSTITELIGMGGKTFLVPGEFPIGCSVVYLTLYKTSNKDEYDPSTGCLKWLNKFGEYHSEKLKVELNRLRKLYPHVNIIYADYYNSLLRIFKEPAKFGFMERPFPACCGIGGPYNFNFTRKCGSVGVKSCKDPSKYVGWDGVHMTEAAYKWIADGILNGPYANPPFDRSCLRSEIKKESLYNQSTLTQACVKL</sequence>
<gene>
    <name type="ordered locus">At1g28600</name>
    <name type="ORF">F1K23.6</name>
</gene>
<reference key="1">
    <citation type="journal article" date="2000" name="Nature">
        <title>Sequence and analysis of chromosome 1 of the plant Arabidopsis thaliana.</title>
        <authorList>
            <person name="Theologis A."/>
            <person name="Ecker J.R."/>
            <person name="Palm C.J."/>
            <person name="Federspiel N.A."/>
            <person name="Kaul S."/>
            <person name="White O."/>
            <person name="Alonso J."/>
            <person name="Altafi H."/>
            <person name="Araujo R."/>
            <person name="Bowman C.L."/>
            <person name="Brooks S.Y."/>
            <person name="Buehler E."/>
            <person name="Chan A."/>
            <person name="Chao Q."/>
            <person name="Chen H."/>
            <person name="Cheuk R.F."/>
            <person name="Chin C.W."/>
            <person name="Chung M.K."/>
            <person name="Conn L."/>
            <person name="Conway A.B."/>
            <person name="Conway A.R."/>
            <person name="Creasy T.H."/>
            <person name="Dewar K."/>
            <person name="Dunn P."/>
            <person name="Etgu P."/>
            <person name="Feldblyum T.V."/>
            <person name="Feng J.-D."/>
            <person name="Fong B."/>
            <person name="Fujii C.Y."/>
            <person name="Gill J.E."/>
            <person name="Goldsmith A.D."/>
            <person name="Haas B."/>
            <person name="Hansen N.F."/>
            <person name="Hughes B."/>
            <person name="Huizar L."/>
            <person name="Hunter J.L."/>
            <person name="Jenkins J."/>
            <person name="Johnson-Hopson C."/>
            <person name="Khan S."/>
            <person name="Khaykin E."/>
            <person name="Kim C.J."/>
            <person name="Koo H.L."/>
            <person name="Kremenetskaia I."/>
            <person name="Kurtz D.B."/>
            <person name="Kwan A."/>
            <person name="Lam B."/>
            <person name="Langin-Hooper S."/>
            <person name="Lee A."/>
            <person name="Lee J.M."/>
            <person name="Lenz C.A."/>
            <person name="Li J.H."/>
            <person name="Li Y.-P."/>
            <person name="Lin X."/>
            <person name="Liu S.X."/>
            <person name="Liu Z.A."/>
            <person name="Luros J.S."/>
            <person name="Maiti R."/>
            <person name="Marziali A."/>
            <person name="Militscher J."/>
            <person name="Miranda M."/>
            <person name="Nguyen M."/>
            <person name="Nierman W.C."/>
            <person name="Osborne B.I."/>
            <person name="Pai G."/>
            <person name="Peterson J."/>
            <person name="Pham P.K."/>
            <person name="Rizzo M."/>
            <person name="Rooney T."/>
            <person name="Rowley D."/>
            <person name="Sakano H."/>
            <person name="Salzberg S.L."/>
            <person name="Schwartz J.R."/>
            <person name="Shinn P."/>
            <person name="Southwick A.M."/>
            <person name="Sun H."/>
            <person name="Tallon L.J."/>
            <person name="Tambunga G."/>
            <person name="Toriumi M.J."/>
            <person name="Town C.D."/>
            <person name="Utterback T."/>
            <person name="Van Aken S."/>
            <person name="Vaysberg M."/>
            <person name="Vysotskaia V.S."/>
            <person name="Walker M."/>
            <person name="Wu D."/>
            <person name="Yu G."/>
            <person name="Fraser C.M."/>
            <person name="Venter J.C."/>
            <person name="Davis R.W."/>
        </authorList>
    </citation>
    <scope>NUCLEOTIDE SEQUENCE [LARGE SCALE GENOMIC DNA]</scope>
    <source>
        <strain>cv. Columbia</strain>
    </source>
</reference>
<reference key="2">
    <citation type="journal article" date="2017" name="Plant J.">
        <title>Araport11: a complete reannotation of the Arabidopsis thaliana reference genome.</title>
        <authorList>
            <person name="Cheng C.Y."/>
            <person name="Krishnakumar V."/>
            <person name="Chan A.P."/>
            <person name="Thibaud-Nissen F."/>
            <person name="Schobel S."/>
            <person name="Town C.D."/>
        </authorList>
    </citation>
    <scope>GENOME REANNOTATION</scope>
    <source>
        <strain>cv. Columbia</strain>
    </source>
</reference>
<reference key="3">
    <citation type="journal article" date="2003" name="Science">
        <title>Empirical analysis of transcriptional activity in the Arabidopsis genome.</title>
        <authorList>
            <person name="Yamada K."/>
            <person name="Lim J."/>
            <person name="Dale J.M."/>
            <person name="Chen H."/>
            <person name="Shinn P."/>
            <person name="Palm C.J."/>
            <person name="Southwick A.M."/>
            <person name="Wu H.C."/>
            <person name="Kim C.J."/>
            <person name="Nguyen M."/>
            <person name="Pham P.K."/>
            <person name="Cheuk R.F."/>
            <person name="Karlin-Newmann G."/>
            <person name="Liu S.X."/>
            <person name="Lam B."/>
            <person name="Sakano H."/>
            <person name="Wu T."/>
            <person name="Yu G."/>
            <person name="Miranda M."/>
            <person name="Quach H.L."/>
            <person name="Tripp M."/>
            <person name="Chang C.H."/>
            <person name="Lee J.M."/>
            <person name="Toriumi M.J."/>
            <person name="Chan M.M."/>
            <person name="Tang C.C."/>
            <person name="Onodera C.S."/>
            <person name="Deng J.M."/>
            <person name="Akiyama K."/>
            <person name="Ansari Y."/>
            <person name="Arakawa T."/>
            <person name="Banh J."/>
            <person name="Banno F."/>
            <person name="Bowser L."/>
            <person name="Brooks S.Y."/>
            <person name="Carninci P."/>
            <person name="Chao Q."/>
            <person name="Choy N."/>
            <person name="Enju A."/>
            <person name="Goldsmith A.D."/>
            <person name="Gurjal M."/>
            <person name="Hansen N.F."/>
            <person name="Hayashizaki Y."/>
            <person name="Johnson-Hopson C."/>
            <person name="Hsuan V.W."/>
            <person name="Iida K."/>
            <person name="Karnes M."/>
            <person name="Khan S."/>
            <person name="Koesema E."/>
            <person name="Ishida J."/>
            <person name="Jiang P.X."/>
            <person name="Jones T."/>
            <person name="Kawai J."/>
            <person name="Kamiya A."/>
            <person name="Meyers C."/>
            <person name="Nakajima M."/>
            <person name="Narusaka M."/>
            <person name="Seki M."/>
            <person name="Sakurai T."/>
            <person name="Satou M."/>
            <person name="Tamse R."/>
            <person name="Vaysberg M."/>
            <person name="Wallender E.K."/>
            <person name="Wong C."/>
            <person name="Yamamura Y."/>
            <person name="Yuan S."/>
            <person name="Shinozaki K."/>
            <person name="Davis R.W."/>
            <person name="Theologis A."/>
            <person name="Ecker J.R."/>
        </authorList>
    </citation>
    <scope>NUCLEOTIDE SEQUENCE [LARGE SCALE MRNA] (ISOFORM 1)</scope>
    <source>
        <strain>cv. Columbia</strain>
    </source>
</reference>
<reference key="4">
    <citation type="submission" date="2002-03" db="EMBL/GenBank/DDBJ databases">
        <title>Full-length cDNA from Arabidopsis thaliana.</title>
        <authorList>
            <person name="Brover V.V."/>
            <person name="Troukhan M.E."/>
            <person name="Alexandrov N.A."/>
            <person name="Lu Y.-P."/>
            <person name="Flavell R.B."/>
            <person name="Feldmann K.A."/>
        </authorList>
    </citation>
    <scope>NUCLEOTIDE SEQUENCE [LARGE SCALE MRNA] (ISOFORM 1)</scope>
</reference>
<reference key="5">
    <citation type="journal article" date="2004" name="Prog. Lipid Res.">
        <title>GDSL family of serine esterases/lipases.</title>
        <authorList>
            <person name="Akoh C.C."/>
            <person name="Lee G.-C."/>
            <person name="Liaw Y.-C."/>
            <person name="Huang T.-H."/>
            <person name="Shaw J.-F."/>
        </authorList>
    </citation>
    <scope>REVIEW</scope>
</reference>
<reference key="6">
    <citation type="journal article" date="2008" name="Pak. J. Biol. Sci.">
        <title>Sequence analysis of GDSL lipase gene family in Arabidopsis thaliana.</title>
        <authorList>
            <person name="Ling H."/>
        </authorList>
    </citation>
    <scope>GENE FAMILY</scope>
</reference>
<organism>
    <name type="scientific">Arabidopsis thaliana</name>
    <name type="common">Mouse-ear cress</name>
    <dbReference type="NCBI Taxonomy" id="3702"/>
    <lineage>
        <taxon>Eukaryota</taxon>
        <taxon>Viridiplantae</taxon>
        <taxon>Streptophyta</taxon>
        <taxon>Embryophyta</taxon>
        <taxon>Tracheophyta</taxon>
        <taxon>Spermatophyta</taxon>
        <taxon>Magnoliopsida</taxon>
        <taxon>eudicotyledons</taxon>
        <taxon>Gunneridae</taxon>
        <taxon>Pentapetalae</taxon>
        <taxon>rosids</taxon>
        <taxon>malvids</taxon>
        <taxon>Brassicales</taxon>
        <taxon>Brassicaceae</taxon>
        <taxon>Camelineae</taxon>
        <taxon>Arabidopsis</taxon>
    </lineage>
</organism>